<proteinExistence type="inferred from homology"/>
<reference key="1">
    <citation type="journal article" date="2005" name="Proc. Natl. Acad. Sci. U.S.A.">
        <title>Complete genome sequence of Vibrio fischeri: a symbiotic bacterium with pathogenic congeners.</title>
        <authorList>
            <person name="Ruby E.G."/>
            <person name="Urbanowski M."/>
            <person name="Campbell J."/>
            <person name="Dunn A."/>
            <person name="Faini M."/>
            <person name="Gunsalus R."/>
            <person name="Lostroh P."/>
            <person name="Lupp C."/>
            <person name="McCann J."/>
            <person name="Millikan D."/>
            <person name="Schaefer A."/>
            <person name="Stabb E."/>
            <person name="Stevens A."/>
            <person name="Visick K."/>
            <person name="Whistler C."/>
            <person name="Greenberg E.P."/>
        </authorList>
    </citation>
    <scope>NUCLEOTIDE SEQUENCE [LARGE SCALE GENOMIC DNA]</scope>
    <source>
        <strain>ATCC 700601 / ES114</strain>
    </source>
</reference>
<protein>
    <recommendedName>
        <fullName evidence="2">Ornithine carbamoyltransferase</fullName>
        <shortName evidence="2">OTCase</shortName>
        <ecNumber evidence="2">2.1.3.3</ecNumber>
    </recommendedName>
</protein>
<keyword id="KW-0028">Amino-acid biosynthesis</keyword>
<keyword id="KW-0055">Arginine biosynthesis</keyword>
<keyword id="KW-0963">Cytoplasm</keyword>
<keyword id="KW-1185">Reference proteome</keyword>
<keyword id="KW-0808">Transferase</keyword>
<organism>
    <name type="scientific">Aliivibrio fischeri (strain ATCC 700601 / ES114)</name>
    <name type="common">Vibrio fischeri</name>
    <dbReference type="NCBI Taxonomy" id="312309"/>
    <lineage>
        <taxon>Bacteria</taxon>
        <taxon>Pseudomonadati</taxon>
        <taxon>Pseudomonadota</taxon>
        <taxon>Gammaproteobacteria</taxon>
        <taxon>Vibrionales</taxon>
        <taxon>Vibrionaceae</taxon>
        <taxon>Aliivibrio</taxon>
    </lineage>
</organism>
<evidence type="ECO:0000250" key="1"/>
<evidence type="ECO:0000255" key="2">
    <source>
        <dbReference type="HAMAP-Rule" id="MF_01109"/>
    </source>
</evidence>
<name>OTC_ALIF1</name>
<sequence length="334" mass="37438">MAFNLRNRNFLKLLDFTPKEIAHLLELSAELKKAKYSGYEQPRLTGKNIALIFEKSSTRTRCAFEVAAFDQGAKVTYLGPSGSQIGHKESMKDTARVLGRMYDGIEYRGFGQTIVEELGQYAGVPVWNGLTDEFHPTQILADFLTMQEYANGKQLSQITFAYLGDARNNMGNSLMVGAAKMGMEIRLVAPKQFWPEEELVTQCQEIALQTGAKIVLTEEVTEGVKGCDFLYTDVWVSMGEAPEAWDERVALMTPYQINMDVIKATENPNVKFMHCLPAFHNDETTLGKEIAEKYGMNGLEVTEDVFESEYSIVFDEAENRMHTIKAVMVATLGS</sequence>
<accession>Q5E7U4</accession>
<dbReference type="EC" id="2.1.3.3" evidence="2"/>
<dbReference type="EMBL" id="CP000020">
    <property type="protein sequence ID" value="AAW84902.1"/>
    <property type="molecule type" value="Genomic_DNA"/>
</dbReference>
<dbReference type="RefSeq" id="WP_011261198.1">
    <property type="nucleotide sequence ID" value="NC_006840.2"/>
</dbReference>
<dbReference type="RefSeq" id="YP_203790.1">
    <property type="nucleotide sequence ID" value="NC_006840.2"/>
</dbReference>
<dbReference type="SMR" id="Q5E7U4"/>
<dbReference type="STRING" id="312309.VF_0407"/>
<dbReference type="EnsemblBacteria" id="AAW84902">
    <property type="protein sequence ID" value="AAW84902"/>
    <property type="gene ID" value="VF_0407"/>
</dbReference>
<dbReference type="GeneID" id="54163034"/>
<dbReference type="KEGG" id="vfi:VF_0407"/>
<dbReference type="PATRIC" id="fig|312309.11.peg.397"/>
<dbReference type="eggNOG" id="COG0078">
    <property type="taxonomic scope" value="Bacteria"/>
</dbReference>
<dbReference type="HOGENOM" id="CLU_043846_3_1_6"/>
<dbReference type="OrthoDB" id="9802587at2"/>
<dbReference type="UniPathway" id="UPA00068">
    <property type="reaction ID" value="UER00112"/>
</dbReference>
<dbReference type="Proteomes" id="UP000000537">
    <property type="component" value="Chromosome I"/>
</dbReference>
<dbReference type="GO" id="GO:0005737">
    <property type="term" value="C:cytoplasm"/>
    <property type="evidence" value="ECO:0007669"/>
    <property type="project" value="UniProtKB-SubCell"/>
</dbReference>
<dbReference type="GO" id="GO:0016597">
    <property type="term" value="F:amino acid binding"/>
    <property type="evidence" value="ECO:0007669"/>
    <property type="project" value="InterPro"/>
</dbReference>
<dbReference type="GO" id="GO:0004585">
    <property type="term" value="F:ornithine carbamoyltransferase activity"/>
    <property type="evidence" value="ECO:0007669"/>
    <property type="project" value="UniProtKB-UniRule"/>
</dbReference>
<dbReference type="GO" id="GO:0042450">
    <property type="term" value="P:arginine biosynthetic process via ornithine"/>
    <property type="evidence" value="ECO:0007669"/>
    <property type="project" value="TreeGrafter"/>
</dbReference>
<dbReference type="GO" id="GO:0019240">
    <property type="term" value="P:citrulline biosynthetic process"/>
    <property type="evidence" value="ECO:0007669"/>
    <property type="project" value="TreeGrafter"/>
</dbReference>
<dbReference type="GO" id="GO:0006526">
    <property type="term" value="P:L-arginine biosynthetic process"/>
    <property type="evidence" value="ECO:0007669"/>
    <property type="project" value="UniProtKB-UniRule"/>
</dbReference>
<dbReference type="FunFam" id="3.40.50.1370:FF:000003">
    <property type="entry name" value="Ornithine carbamoyltransferase"/>
    <property type="match status" value="1"/>
</dbReference>
<dbReference type="FunFam" id="3.40.50.1370:FF:000004">
    <property type="entry name" value="Ornithine carbamoyltransferase"/>
    <property type="match status" value="1"/>
</dbReference>
<dbReference type="Gene3D" id="3.40.50.1370">
    <property type="entry name" value="Aspartate/ornithine carbamoyltransferase"/>
    <property type="match status" value="2"/>
</dbReference>
<dbReference type="HAMAP" id="MF_01109">
    <property type="entry name" value="OTCase"/>
    <property type="match status" value="1"/>
</dbReference>
<dbReference type="InterPro" id="IPR006132">
    <property type="entry name" value="Asp/Orn_carbamoyltranf_P-bd"/>
</dbReference>
<dbReference type="InterPro" id="IPR006130">
    <property type="entry name" value="Asp/Orn_carbamoylTrfase"/>
</dbReference>
<dbReference type="InterPro" id="IPR036901">
    <property type="entry name" value="Asp/Orn_carbamoylTrfase_sf"/>
</dbReference>
<dbReference type="InterPro" id="IPR006131">
    <property type="entry name" value="Asp_carbamoyltransf_Asp/Orn-bd"/>
</dbReference>
<dbReference type="InterPro" id="IPR002292">
    <property type="entry name" value="Orn/put_carbamltrans"/>
</dbReference>
<dbReference type="InterPro" id="IPR024904">
    <property type="entry name" value="OTCase_ArgI"/>
</dbReference>
<dbReference type="NCBIfam" id="TIGR00658">
    <property type="entry name" value="orni_carb_tr"/>
    <property type="match status" value="1"/>
</dbReference>
<dbReference type="NCBIfam" id="NF003286">
    <property type="entry name" value="PRK04284.1"/>
    <property type="match status" value="1"/>
</dbReference>
<dbReference type="PANTHER" id="PTHR45753:SF2">
    <property type="entry name" value="ORNITHINE CARBAMOYLTRANSFERASE"/>
    <property type="match status" value="1"/>
</dbReference>
<dbReference type="PANTHER" id="PTHR45753">
    <property type="entry name" value="ORNITHINE CARBAMOYLTRANSFERASE, MITOCHONDRIAL"/>
    <property type="match status" value="1"/>
</dbReference>
<dbReference type="Pfam" id="PF00185">
    <property type="entry name" value="OTCace"/>
    <property type="match status" value="1"/>
</dbReference>
<dbReference type="Pfam" id="PF02729">
    <property type="entry name" value="OTCace_N"/>
    <property type="match status" value="1"/>
</dbReference>
<dbReference type="PRINTS" id="PR00100">
    <property type="entry name" value="AOTCASE"/>
</dbReference>
<dbReference type="PRINTS" id="PR00102">
    <property type="entry name" value="OTCASE"/>
</dbReference>
<dbReference type="SUPFAM" id="SSF53671">
    <property type="entry name" value="Aspartate/ornithine carbamoyltransferase"/>
    <property type="match status" value="1"/>
</dbReference>
<dbReference type="PROSITE" id="PS00097">
    <property type="entry name" value="CARBAMOYLTRANSFERASE"/>
    <property type="match status" value="1"/>
</dbReference>
<feature type="chain" id="PRO_1000065134" description="Ornithine carbamoyltransferase">
    <location>
        <begin position="1"/>
        <end position="334"/>
    </location>
</feature>
<feature type="binding site" evidence="2">
    <location>
        <begin position="57"/>
        <end position="60"/>
    </location>
    <ligand>
        <name>carbamoyl phosphate</name>
        <dbReference type="ChEBI" id="CHEBI:58228"/>
    </ligand>
</feature>
<feature type="binding site" evidence="2">
    <location>
        <position position="84"/>
    </location>
    <ligand>
        <name>carbamoyl phosphate</name>
        <dbReference type="ChEBI" id="CHEBI:58228"/>
    </ligand>
</feature>
<feature type="binding site" evidence="2">
    <location>
        <position position="108"/>
    </location>
    <ligand>
        <name>carbamoyl phosphate</name>
        <dbReference type="ChEBI" id="CHEBI:58228"/>
    </ligand>
</feature>
<feature type="binding site" evidence="2">
    <location>
        <begin position="135"/>
        <end position="138"/>
    </location>
    <ligand>
        <name>carbamoyl phosphate</name>
        <dbReference type="ChEBI" id="CHEBI:58228"/>
    </ligand>
</feature>
<feature type="binding site" evidence="2">
    <location>
        <position position="169"/>
    </location>
    <ligand>
        <name>L-ornithine</name>
        <dbReference type="ChEBI" id="CHEBI:46911"/>
    </ligand>
</feature>
<feature type="binding site" evidence="2">
    <location>
        <position position="233"/>
    </location>
    <ligand>
        <name>L-ornithine</name>
        <dbReference type="ChEBI" id="CHEBI:46911"/>
    </ligand>
</feature>
<feature type="binding site" evidence="2">
    <location>
        <begin position="237"/>
        <end position="238"/>
    </location>
    <ligand>
        <name>L-ornithine</name>
        <dbReference type="ChEBI" id="CHEBI:46911"/>
    </ligand>
</feature>
<feature type="binding site" evidence="2">
    <location>
        <begin position="275"/>
        <end position="276"/>
    </location>
    <ligand>
        <name>carbamoyl phosphate</name>
        <dbReference type="ChEBI" id="CHEBI:58228"/>
    </ligand>
</feature>
<feature type="binding site" evidence="2">
    <location>
        <position position="320"/>
    </location>
    <ligand>
        <name>carbamoyl phosphate</name>
        <dbReference type="ChEBI" id="CHEBI:58228"/>
    </ligand>
</feature>
<gene>
    <name evidence="2" type="primary">argF</name>
    <name type="ordered locus">VF_0407</name>
</gene>
<comment type="function">
    <text evidence="1">Reversibly catalyzes the transfer of the carbamoyl group from carbamoyl phosphate (CP) to the N(epsilon) atom of ornithine (ORN) to produce L-citrulline.</text>
</comment>
<comment type="catalytic activity">
    <reaction evidence="2">
        <text>carbamoyl phosphate + L-ornithine = L-citrulline + phosphate + H(+)</text>
        <dbReference type="Rhea" id="RHEA:19513"/>
        <dbReference type="ChEBI" id="CHEBI:15378"/>
        <dbReference type="ChEBI" id="CHEBI:43474"/>
        <dbReference type="ChEBI" id="CHEBI:46911"/>
        <dbReference type="ChEBI" id="CHEBI:57743"/>
        <dbReference type="ChEBI" id="CHEBI:58228"/>
        <dbReference type="EC" id="2.1.3.3"/>
    </reaction>
</comment>
<comment type="pathway">
    <text evidence="2">Amino-acid biosynthesis; L-arginine biosynthesis; L-arginine from L-ornithine and carbamoyl phosphate: step 1/3.</text>
</comment>
<comment type="subcellular location">
    <subcellularLocation>
        <location evidence="2">Cytoplasm</location>
    </subcellularLocation>
</comment>
<comment type="similarity">
    <text evidence="2">Belongs to the aspartate/ornithine carbamoyltransferase superfamily. OTCase family.</text>
</comment>